<reference key="1">
    <citation type="journal article" date="1987" name="J. Gen. Virol.">
        <title>Fusion glycoprotein of measles virus: nucleotide sequence of the gene and comparison with other paramyxoviruses.</title>
        <authorList>
            <person name="Buckland R."/>
            <person name="Gerald C."/>
            <person name="Barker R."/>
            <person name="Wild T.F."/>
        </authorList>
    </citation>
    <scope>NUCLEOTIDE SEQUENCE [MRNA]</scope>
</reference>
<gene>
    <name type="primary">F</name>
</gene>
<protein>
    <recommendedName>
        <fullName>Fusion glycoprotein F0</fullName>
    </recommendedName>
    <component>
        <recommendedName>
            <fullName>Fusion glycoprotein F2</fullName>
        </recommendedName>
    </component>
    <component>
        <recommendedName>
            <fullName>Fusion glycoprotein F1</fullName>
        </recommendedName>
    </component>
</protein>
<feature type="signal peptide" evidence="3">
    <location>
        <begin position="1"/>
        <end position="23"/>
    </location>
</feature>
<feature type="chain" id="PRO_0000039261" description="Fusion glycoprotein F0">
    <location>
        <begin position="24"/>
        <end position="550"/>
    </location>
</feature>
<feature type="chain" id="PRO_0000039262" description="Fusion glycoprotein F2">
    <location>
        <begin position="24"/>
        <end position="112"/>
    </location>
</feature>
<feature type="chain" id="PRO_0000039263" description="Fusion glycoprotein F1">
    <location>
        <begin position="113"/>
        <end position="550"/>
    </location>
</feature>
<feature type="topological domain" description="Extracellular" evidence="1">
    <location>
        <begin position="24"/>
        <end position="487"/>
    </location>
</feature>
<feature type="transmembrane region" description="Helical" evidence="3">
    <location>
        <begin position="488"/>
        <end position="518"/>
    </location>
</feature>
<feature type="topological domain" description="Cytoplasmic" evidence="1">
    <location>
        <begin position="519"/>
        <end position="550"/>
    </location>
</feature>
<feature type="region of interest" description="HRC" evidence="2">
    <location>
        <begin position="69"/>
        <end position="95"/>
    </location>
</feature>
<feature type="region of interest" description="Fusion peptide" evidence="2">
    <location>
        <begin position="113"/>
        <end position="138"/>
    </location>
</feature>
<feature type="region of interest" description="HRA" evidence="2">
    <location>
        <begin position="139"/>
        <end position="215"/>
    </location>
</feature>
<feature type="region of interest" description="Interaction with hemagglutinin" evidence="2">
    <location>
        <begin position="367"/>
        <end position="444"/>
    </location>
</feature>
<feature type="region of interest" description="HRB" evidence="2">
    <location>
        <begin position="445"/>
        <end position="494"/>
    </location>
</feature>
<feature type="coiled-coil region" evidence="3">
    <location>
        <begin position="138"/>
        <end position="166"/>
    </location>
</feature>
<feature type="coiled-coil region" evidence="3">
    <location>
        <begin position="462"/>
        <end position="487"/>
    </location>
</feature>
<feature type="site" description="Cleavage; by host" evidence="1">
    <location>
        <begin position="112"/>
        <end position="113"/>
    </location>
</feature>
<feature type="glycosylation site" description="N-linked (GlcNAc...) asparagine; by host" evidence="3">
    <location>
        <position position="29"/>
    </location>
</feature>
<feature type="glycosylation site" description="N-linked (GlcNAc...) asparagine; by host" evidence="3">
    <location>
        <position position="61"/>
    </location>
</feature>
<feature type="glycosylation site" description="N-linked (GlcNAc...) asparagine; by host" evidence="3">
    <location>
        <position position="67"/>
    </location>
</feature>
<feature type="disulfide bond" description="Interchain (with C-195)" evidence="2">
    <location>
        <position position="68"/>
    </location>
</feature>
<feature type="disulfide bond" description="Interchain (with C-68)" evidence="2">
    <location>
        <position position="195"/>
    </location>
</feature>
<feature type="disulfide bond" evidence="2">
    <location>
        <begin position="334"/>
        <end position="343"/>
    </location>
</feature>
<feature type="disulfide bond" evidence="2">
    <location>
        <begin position="358"/>
        <end position="366"/>
    </location>
</feature>
<feature type="disulfide bond" evidence="2">
    <location>
        <begin position="390"/>
        <end position="395"/>
    </location>
</feature>
<feature type="disulfide bond" evidence="2">
    <location>
        <begin position="397"/>
        <end position="420"/>
    </location>
</feature>
<sequence>MGLKVNVSAIFMAVLLTLQTPTGQIHWGNLSKIGVVGIGSASYKVMTRSSHQSLVIKLMPNITLLNNCTRVEIAEYRRLLRTVLEPIRDALNAMTQNIRPVQSVASSRRHKRFAGVVLAGAALGVATAAQITAGIALHQSMLNSQAIDNLRASLETTNQAIEAIRQAGQEMILAVQGVQDYINNELIPSMNQLSCDLIGQKLGLKLLRYYTEILSLFGPSLRDPISAEISIQALSYALGGDINKVLEKLGYSGGDLLGILESRGIKARITHVDTESYFIVLSIAYPTLSEIKGVIVHRLEGVSYNIGSQEWYTTVPKYVATQGYLISNFDESSCTFMPEGTVCSQNALYPMSPLLQECLRGSTKSCARTLVSGSFGNRFILSQGNLIANCASILCKCYTTGTIINQDPDKILTYIAADHCPVVEVNGVTIQVGSRRYPDAVYLHRIDLGPPISLERLDVGTNLGNAIAKLEDAKELLESSDQILRSMKGLSSTSIVYILIAVCLGGLIGIPALICCCRGRCNKKGEQVGMSRPGLKPDLTGTSKSYVRSL</sequence>
<name>FUS_MEASH</name>
<keyword id="KW-0165">Cleavage on pair of basic residues</keyword>
<keyword id="KW-0175">Coiled coil</keyword>
<keyword id="KW-1015">Disulfide bond</keyword>
<keyword id="KW-1169">Fusion of virus membrane with host cell membrane</keyword>
<keyword id="KW-1168">Fusion of virus membrane with host membrane</keyword>
<keyword id="KW-0325">Glycoprotein</keyword>
<keyword id="KW-1032">Host cell membrane</keyword>
<keyword id="KW-1043">Host membrane</keyword>
<keyword id="KW-0472">Membrane</keyword>
<keyword id="KW-0732">Signal</keyword>
<keyword id="KW-0812">Transmembrane</keyword>
<keyword id="KW-1133">Transmembrane helix</keyword>
<keyword id="KW-0261">Viral envelope protein</keyword>
<keyword id="KW-1162">Viral penetration into host cytoplasm</keyword>
<keyword id="KW-0946">Virion</keyword>
<keyword id="KW-1160">Virus entry into host cell</keyword>
<comment type="function">
    <text evidence="1 2">Class I viral fusion protein. Under the current model, the protein has at least 3 conformational states: pre-fusion native state, pre-hairpin intermediate state, and post-fusion hairpin state. During viral and plasma cell membrane fusion, the heptad repeat (HR) regions assume a trimer-of-hairpins structure, positioning the fusion peptide in close proximity to the C-terminal region of the ectodomain. The formation of this structure appears to drive apposition and subsequent fusion of viral and plasma cell membranes. Directs fusion of viral and cellular membranes leading to delivery of the nucleocapsid into the cytoplasm. This fusion is pH independent and occurs directly at the outer cell membrane. During viral entry or virus-mediated fusion between infected cells and neighboring susceptible cells, the head domain of the H protein initially binds to its receptor and then the stalk region of the H protein transmits the fusion-triggering signal to the F protein (By similarity). Upon HN binding to its cellular receptor, the hydrophobic fusion peptide is unmasked and interacts with the cellular membrane, inducing the fusion between cell and virion membranes. Later in infection, F proteins expressed at the plasma membrane of infected cells could mediate fusion with adjacent cells to form syncytia, a cytopathic effect that could lead to tissue necrosis (By similarity).</text>
</comment>
<comment type="function">
    <text evidence="2">Some hyperfusogenic isolates can induce membrane fusion in SLAM- and nectin-4-negative cells and are linked to fatal subacute sclerosing panencephalitis (SSPE) or measles inclusion body encephalitis (MIBE). The neuropathogenicity is closely associated with enhanced propagation mediated by cell-to-cell fusion in the brain, which is principally regulated by hyperfusogenic mutations of the viral F protein. Cell-to-cell transmission of the virus also occurs with hyperfusogenic isolates.</text>
</comment>
<comment type="subunit">
    <text evidence="2">Homotrimer of disulfide-linked F1-F2.</text>
</comment>
<comment type="subcellular location">
    <subcellularLocation>
        <location evidence="1">Virion membrane</location>
        <topology evidence="1">Single-pass type I membrane protein</topology>
    </subcellularLocation>
    <subcellularLocation>
        <location evidence="1">Host cell membrane</location>
        <topology evidence="1">Single-pass membrane protein</topology>
    </subcellularLocation>
</comment>
<comment type="domain">
    <text evidence="2">Contains 3 heptad repreat regions, HRA, HRB and HRC.</text>
</comment>
<comment type="PTM">
    <text evidence="2">The inactive precursor F0 is glycosylated and proteolytically cleaved into F1 and F2 to be functionally active. The cleavage is mediated by host furin during the transport and maturation of the polypeptide.</text>
</comment>
<comment type="similarity">
    <text evidence="4">Belongs to the paramyxoviruses fusion glycoprotein family.</text>
</comment>
<comment type="sequence caution" evidence="4">
    <conflict type="erroneous initiation">
        <sequence resource="EMBL-CDS" id="CAA29090"/>
    </conflict>
</comment>
<evidence type="ECO:0000250" key="1"/>
<evidence type="ECO:0000250" key="2">
    <source>
        <dbReference type="UniProtKB" id="Q786F3"/>
    </source>
</evidence>
<evidence type="ECO:0000255" key="3"/>
<evidence type="ECO:0000305" key="4"/>
<dbReference type="EMBL" id="X05597">
    <property type="protein sequence ID" value="CAA29090.1"/>
    <property type="status" value="ALT_INIT"/>
    <property type="molecule type" value="mRNA"/>
</dbReference>
<dbReference type="SMR" id="P69355"/>
<dbReference type="GlyCosmos" id="P69355">
    <property type="glycosylation" value="3 sites, No reported glycans"/>
</dbReference>
<dbReference type="GO" id="GO:0020002">
    <property type="term" value="C:host cell plasma membrane"/>
    <property type="evidence" value="ECO:0007669"/>
    <property type="project" value="UniProtKB-SubCell"/>
</dbReference>
<dbReference type="GO" id="GO:0016020">
    <property type="term" value="C:membrane"/>
    <property type="evidence" value="ECO:0007669"/>
    <property type="project" value="UniProtKB-KW"/>
</dbReference>
<dbReference type="GO" id="GO:0019031">
    <property type="term" value="C:viral envelope"/>
    <property type="evidence" value="ECO:0007669"/>
    <property type="project" value="UniProtKB-KW"/>
</dbReference>
<dbReference type="GO" id="GO:0055036">
    <property type="term" value="C:virion membrane"/>
    <property type="evidence" value="ECO:0007669"/>
    <property type="project" value="UniProtKB-SubCell"/>
</dbReference>
<dbReference type="GO" id="GO:0019064">
    <property type="term" value="P:fusion of virus membrane with host plasma membrane"/>
    <property type="evidence" value="ECO:0007669"/>
    <property type="project" value="UniProtKB-KW"/>
</dbReference>
<dbReference type="GO" id="GO:0046718">
    <property type="term" value="P:symbiont entry into host cell"/>
    <property type="evidence" value="ECO:0007669"/>
    <property type="project" value="UniProtKB-KW"/>
</dbReference>
<dbReference type="Gene3D" id="1.10.287.2480">
    <property type="match status" value="1"/>
</dbReference>
<dbReference type="Gene3D" id="6.10.10.110">
    <property type="match status" value="1"/>
</dbReference>
<dbReference type="Gene3D" id="2.60.40.1690">
    <property type="entry name" value="Head and neck region of the ectodomain of NDV fusion glycoprotein"/>
    <property type="match status" value="1"/>
</dbReference>
<dbReference type="Gene3D" id="2.40.490.10">
    <property type="entry name" value="Newcastle disease virus like domain"/>
    <property type="match status" value="1"/>
</dbReference>
<dbReference type="InterPro" id="IPR000776">
    <property type="entry name" value="Fusion_F0_Paramyxovir"/>
</dbReference>
<dbReference type="Pfam" id="PF00523">
    <property type="entry name" value="Fusion_gly"/>
    <property type="match status" value="1"/>
</dbReference>
<dbReference type="SUPFAM" id="SSF69922">
    <property type="entry name" value="Head and neck region of the ectodomain of NDV fusion glycoprotein"/>
    <property type="match status" value="1"/>
</dbReference>
<dbReference type="SUPFAM" id="SSF58069">
    <property type="entry name" value="Virus ectodomain"/>
    <property type="match status" value="1"/>
</dbReference>
<organism>
    <name type="scientific">Measles virus (strain Halle)</name>
    <name type="common">MeV</name>
    <name type="synonym">Subacute sclerose panencephalitis virus</name>
    <dbReference type="NCBI Taxonomy" id="11236"/>
    <lineage>
        <taxon>Viruses</taxon>
        <taxon>Riboviria</taxon>
        <taxon>Orthornavirae</taxon>
        <taxon>Negarnaviricota</taxon>
        <taxon>Haploviricotina</taxon>
        <taxon>Monjiviricetes</taxon>
        <taxon>Mononegavirales</taxon>
        <taxon>Paramyxoviridae</taxon>
        <taxon>Orthoparamyxovirinae</taxon>
        <taxon>Morbillivirus</taxon>
        <taxon>Morbillivirus hominis</taxon>
        <taxon>Measles morbillivirus</taxon>
    </lineage>
</organism>
<accession>P69355</accession>
<accession>P08300</accession>
<proteinExistence type="evidence at transcript level"/>
<organismHost>
    <name type="scientific">Homo sapiens</name>
    <name type="common">Human</name>
    <dbReference type="NCBI Taxonomy" id="9606"/>
</organismHost>